<dbReference type="EC" id="3.1.22.-"/>
<dbReference type="EMBL" id="AE016819">
    <property type="protein sequence ID" value="AAS53512.1"/>
    <property type="molecule type" value="Genomic_DNA"/>
</dbReference>
<dbReference type="RefSeq" id="NP_985688.1">
    <property type="nucleotide sequence ID" value="NM_211042.1"/>
</dbReference>
<dbReference type="SMR" id="Q754C9"/>
<dbReference type="FunCoup" id="Q754C9">
    <property type="interactions" value="221"/>
</dbReference>
<dbReference type="STRING" id="284811.Q754C9"/>
<dbReference type="EnsemblFungi" id="AAS53512">
    <property type="protein sequence ID" value="AAS53512"/>
    <property type="gene ID" value="AGOS_AFR141C"/>
</dbReference>
<dbReference type="GeneID" id="4621939"/>
<dbReference type="KEGG" id="ago:AGOS_AFR141C"/>
<dbReference type="eggNOG" id="KOG2379">
    <property type="taxonomic scope" value="Eukaryota"/>
</dbReference>
<dbReference type="HOGENOM" id="CLU_014329_1_0_1"/>
<dbReference type="InParanoid" id="Q754C9"/>
<dbReference type="OMA" id="ELGDAMW"/>
<dbReference type="OrthoDB" id="5963188at2759"/>
<dbReference type="Proteomes" id="UP000000591">
    <property type="component" value="Chromosome VI"/>
</dbReference>
<dbReference type="GO" id="GO:0048476">
    <property type="term" value="C:Holliday junction resolvase complex"/>
    <property type="evidence" value="ECO:0000318"/>
    <property type="project" value="GO_Central"/>
</dbReference>
<dbReference type="GO" id="GO:0005634">
    <property type="term" value="C:nucleus"/>
    <property type="evidence" value="ECO:0000318"/>
    <property type="project" value="GO_Central"/>
</dbReference>
<dbReference type="GO" id="GO:0048257">
    <property type="term" value="F:3'-flap endonuclease activity"/>
    <property type="evidence" value="ECO:0000318"/>
    <property type="project" value="GO_Central"/>
</dbReference>
<dbReference type="GO" id="GO:0008821">
    <property type="term" value="F:crossover junction DNA endonuclease activity"/>
    <property type="evidence" value="ECO:0007669"/>
    <property type="project" value="EnsemblFungi"/>
</dbReference>
<dbReference type="GO" id="GO:0003677">
    <property type="term" value="F:DNA binding"/>
    <property type="evidence" value="ECO:0007669"/>
    <property type="project" value="InterPro"/>
</dbReference>
<dbReference type="GO" id="GO:0004857">
    <property type="term" value="F:enzyme inhibitor activity"/>
    <property type="evidence" value="ECO:0007669"/>
    <property type="project" value="EnsemblFungi"/>
</dbReference>
<dbReference type="GO" id="GO:0046872">
    <property type="term" value="F:metal ion binding"/>
    <property type="evidence" value="ECO:0007669"/>
    <property type="project" value="UniProtKB-KW"/>
</dbReference>
<dbReference type="GO" id="GO:0006308">
    <property type="term" value="P:DNA catabolic process"/>
    <property type="evidence" value="ECO:0007669"/>
    <property type="project" value="InterPro"/>
</dbReference>
<dbReference type="GO" id="GO:0006265">
    <property type="term" value="P:DNA topological change"/>
    <property type="evidence" value="ECO:0007669"/>
    <property type="project" value="EnsemblFungi"/>
</dbReference>
<dbReference type="GO" id="GO:0000727">
    <property type="term" value="P:double-strand break repair via break-induced replication"/>
    <property type="evidence" value="ECO:0000318"/>
    <property type="project" value="GO_Central"/>
</dbReference>
<dbReference type="GO" id="GO:0031573">
    <property type="term" value="P:mitotic intra-S DNA damage checkpoint signaling"/>
    <property type="evidence" value="ECO:0000318"/>
    <property type="project" value="GO_Central"/>
</dbReference>
<dbReference type="GO" id="GO:0000712">
    <property type="term" value="P:resolution of meiotic recombination intermediates"/>
    <property type="evidence" value="ECO:0000318"/>
    <property type="project" value="GO_Central"/>
</dbReference>
<dbReference type="CDD" id="cd21036">
    <property type="entry name" value="WH_MUS81"/>
    <property type="match status" value="1"/>
</dbReference>
<dbReference type="CDD" id="cd20074">
    <property type="entry name" value="XPF_nuclease_Mus81"/>
    <property type="match status" value="1"/>
</dbReference>
<dbReference type="FunFam" id="1.10.10.10:FF:000307">
    <property type="entry name" value="Crossover junction endonuclease MUS81"/>
    <property type="match status" value="1"/>
</dbReference>
<dbReference type="FunFam" id="3.40.50.10130:FF:000011">
    <property type="entry name" value="Crossover junction endonuclease MUS81"/>
    <property type="match status" value="1"/>
</dbReference>
<dbReference type="Gene3D" id="3.40.50.10130">
    <property type="match status" value="1"/>
</dbReference>
<dbReference type="Gene3D" id="1.10.150.670">
    <property type="entry name" value="Crossover junction endonuclease EME1, DNA-binding domain"/>
    <property type="match status" value="1"/>
</dbReference>
<dbReference type="Gene3D" id="1.10.150.110">
    <property type="entry name" value="DNA polymerase beta, N-terminal domain-like"/>
    <property type="match status" value="1"/>
</dbReference>
<dbReference type="Gene3D" id="1.10.10.10">
    <property type="entry name" value="Winged helix-like DNA-binding domain superfamily/Winged helix DNA-binding domain"/>
    <property type="match status" value="1"/>
</dbReference>
<dbReference type="InterPro" id="IPR027421">
    <property type="entry name" value="DNA_pol_lamdba_lyase_dom_sf"/>
</dbReference>
<dbReference type="InterPro" id="IPR042530">
    <property type="entry name" value="EME1/EME2_C"/>
</dbReference>
<dbReference type="InterPro" id="IPR006166">
    <property type="entry name" value="ERCC4_domain"/>
</dbReference>
<dbReference type="InterPro" id="IPR033309">
    <property type="entry name" value="Mus81"/>
</dbReference>
<dbReference type="InterPro" id="IPR011335">
    <property type="entry name" value="Restrct_endonuc-II-like"/>
</dbReference>
<dbReference type="InterPro" id="IPR036388">
    <property type="entry name" value="WH-like_DNA-bd_sf"/>
</dbReference>
<dbReference type="InterPro" id="IPR047417">
    <property type="entry name" value="WH_MUS81"/>
</dbReference>
<dbReference type="InterPro" id="IPR047416">
    <property type="entry name" value="XPF_nuclease_Mus81"/>
</dbReference>
<dbReference type="PANTHER" id="PTHR13451">
    <property type="entry name" value="CLASS II CROSSOVER JUNCTION ENDONUCLEASE MUS81"/>
    <property type="match status" value="1"/>
</dbReference>
<dbReference type="PANTHER" id="PTHR13451:SF0">
    <property type="entry name" value="CROSSOVER JUNCTION ENDONUCLEASE MUS81"/>
    <property type="match status" value="1"/>
</dbReference>
<dbReference type="Pfam" id="PF21292">
    <property type="entry name" value="EME1-MUS81_C"/>
    <property type="match status" value="1"/>
</dbReference>
<dbReference type="Pfam" id="PF02732">
    <property type="entry name" value="ERCC4"/>
    <property type="match status" value="1"/>
</dbReference>
<dbReference type="Pfam" id="PF21136">
    <property type="entry name" value="MUS81-like_WH"/>
    <property type="match status" value="1"/>
</dbReference>
<dbReference type="SMART" id="SM00891">
    <property type="entry name" value="ERCC4"/>
    <property type="match status" value="1"/>
</dbReference>
<dbReference type="SUPFAM" id="SSF47802">
    <property type="entry name" value="DNA polymerase beta, N-terminal domain-like"/>
    <property type="match status" value="1"/>
</dbReference>
<dbReference type="SUPFAM" id="SSF52980">
    <property type="entry name" value="Restriction endonuclease-like"/>
    <property type="match status" value="1"/>
</dbReference>
<gene>
    <name type="primary">MUS81</name>
    <name type="ordered locus">AFR141C</name>
</gene>
<sequence length="604" mass="68728">MSAKQLGDLKPLFIEWLKDEIDACGPRQEKMAMVYFRARESLKRFDQPITETAKVLKVKGIGNSIKNKLASKLAQYCQDNNIPLEDAAAPSHVVGISVTRVRTATQEKDDQSPKRKKRKYVPRKRSGAYAILLGALELGCPSRGLTKEEIIDAAAKYCDVSFVSNPLTREFYSAWTAIKVLIDHDLMLEQGRPRRYIVTEAGEQMAETLKHADSVIFPEDCPYQRRQQAPESTAEDHTELSASLSELVRQEHLPQNHSGMCFSFEPPSSAPSDYLDPGQKSANVASSPHRLRPPIGPSIDIVKARWNGTSYELWKPGSYDIELYIDHREVRAKSERDFFVNALLTRGVTVEGKALALGDMVWVARHRDSRSTCVLNFMLERKRLDDLAMSIRDNRFMEQKNRLKKTGCKHIFYLVEETSGTNVAGMEGAIKTSIWMTYVYSGFHVKRTRNADDTVEWLHDMTCTVQRYYCSKSLLVLRPREIANQEDYGSLLSAFRLQFERNNTSLECCHAFDCYQEVLGKTGLMTVKELYIRTLMLNRGVSLEKALAIQSKFPTLRSLMTAFRNCKSEEDGRRMLYLALLDQPASRRVGKALAATLWDTFGRR</sequence>
<comment type="function">
    <text evidence="1">Interacts with EME1 to form a DNA structure-specific endonuclease with substrate preference for branched DNA structures with a 5'-end at the branch nick. Typical substrates include 3'-flap structures, D-loops, replication forks and nicked Holliday junctions. May be required in mitosis for the processing of stalled or collapsed replication fork intermediates. May be required in meiosis for the repair of meiosis-specific double strand breaks subsequent to single-end invasion (SEI) (By similarity).</text>
</comment>
<comment type="cofactor">
    <cofactor evidence="1">
        <name>Mg(2+)</name>
        <dbReference type="ChEBI" id="CHEBI:18420"/>
    </cofactor>
</comment>
<comment type="subunit">
    <text evidence="1">Interacts with EME1.</text>
</comment>
<comment type="subcellular location">
    <subcellularLocation>
        <location evidence="1">Nucleus</location>
    </subcellularLocation>
</comment>
<comment type="similarity">
    <text evidence="3">Belongs to the XPF family.</text>
</comment>
<feature type="chain" id="PRO_0000223639" description="Crossover junction endonuclease MUS81">
    <location>
        <begin position="1"/>
        <end position="604"/>
    </location>
</feature>
<feature type="domain" description="ERCC4">
    <location>
        <begin position="322"/>
        <end position="419"/>
    </location>
</feature>
<feature type="region of interest" description="Disordered" evidence="2">
    <location>
        <begin position="268"/>
        <end position="290"/>
    </location>
</feature>
<proteinExistence type="inferred from homology"/>
<protein>
    <recommendedName>
        <fullName>Crossover junction endonuclease MUS81</fullName>
        <ecNumber>3.1.22.-</ecNumber>
    </recommendedName>
</protein>
<accession>Q754C9</accession>
<organism>
    <name type="scientific">Eremothecium gossypii (strain ATCC 10895 / CBS 109.51 / FGSC 9923 / NRRL Y-1056)</name>
    <name type="common">Yeast</name>
    <name type="synonym">Ashbya gossypii</name>
    <dbReference type="NCBI Taxonomy" id="284811"/>
    <lineage>
        <taxon>Eukaryota</taxon>
        <taxon>Fungi</taxon>
        <taxon>Dikarya</taxon>
        <taxon>Ascomycota</taxon>
        <taxon>Saccharomycotina</taxon>
        <taxon>Saccharomycetes</taxon>
        <taxon>Saccharomycetales</taxon>
        <taxon>Saccharomycetaceae</taxon>
        <taxon>Eremothecium</taxon>
    </lineage>
</organism>
<keyword id="KW-0227">DNA damage</keyword>
<keyword id="KW-0233">DNA recombination</keyword>
<keyword id="KW-0234">DNA repair</keyword>
<keyword id="KW-0255">Endonuclease</keyword>
<keyword id="KW-0378">Hydrolase</keyword>
<keyword id="KW-0460">Magnesium</keyword>
<keyword id="KW-0469">Meiosis</keyword>
<keyword id="KW-0479">Metal-binding</keyword>
<keyword id="KW-0540">Nuclease</keyword>
<keyword id="KW-0539">Nucleus</keyword>
<keyword id="KW-1185">Reference proteome</keyword>
<name>MUS81_EREGS</name>
<evidence type="ECO:0000250" key="1"/>
<evidence type="ECO:0000256" key="2">
    <source>
        <dbReference type="SAM" id="MobiDB-lite"/>
    </source>
</evidence>
<evidence type="ECO:0000305" key="3"/>
<reference key="1">
    <citation type="journal article" date="2004" name="Science">
        <title>The Ashbya gossypii genome as a tool for mapping the ancient Saccharomyces cerevisiae genome.</title>
        <authorList>
            <person name="Dietrich F.S."/>
            <person name="Voegeli S."/>
            <person name="Brachat S."/>
            <person name="Lerch A."/>
            <person name="Gates K."/>
            <person name="Steiner S."/>
            <person name="Mohr C."/>
            <person name="Poehlmann R."/>
            <person name="Luedi P."/>
            <person name="Choi S."/>
            <person name="Wing R.A."/>
            <person name="Flavier A."/>
            <person name="Gaffney T.D."/>
            <person name="Philippsen P."/>
        </authorList>
    </citation>
    <scope>NUCLEOTIDE SEQUENCE [LARGE SCALE GENOMIC DNA]</scope>
    <source>
        <strain>ATCC 10895 / CBS 109.51 / FGSC 9923 / NRRL Y-1056</strain>
    </source>
</reference>
<reference key="2">
    <citation type="journal article" date="2013" name="G3 (Bethesda)">
        <title>Genomes of Ashbya fungi isolated from insects reveal four mating-type loci, numerous translocations, lack of transposons, and distinct gene duplications.</title>
        <authorList>
            <person name="Dietrich F.S."/>
            <person name="Voegeli S."/>
            <person name="Kuo S."/>
            <person name="Philippsen P."/>
        </authorList>
    </citation>
    <scope>GENOME REANNOTATION</scope>
    <source>
        <strain>ATCC 10895 / CBS 109.51 / FGSC 9923 / NRRL Y-1056</strain>
    </source>
</reference>